<sequence>MAKKLTATVELMLPAGQATPAPPVGPALGQHGINIMEFVKQFNAASKDMEPGTIVPVVISIYADRSFTFIMKTPPTSFLLKKAAKVQKGSSDPKRQKAGKITLNQLKEIAQLKAKDMNTQDLDAVMRTIAGTARSMGIEIEGYKG</sequence>
<evidence type="ECO:0000255" key="1">
    <source>
        <dbReference type="HAMAP-Rule" id="MF_00736"/>
    </source>
</evidence>
<evidence type="ECO:0000305" key="2"/>
<feature type="chain" id="PRO_1000195653" description="Large ribosomal subunit protein uL11">
    <location>
        <begin position="1"/>
        <end position="145"/>
    </location>
</feature>
<name>RL11_HYDS0</name>
<proteinExistence type="inferred from homology"/>
<accession>B4U733</accession>
<protein>
    <recommendedName>
        <fullName evidence="1">Large ribosomal subunit protein uL11</fullName>
    </recommendedName>
    <alternativeName>
        <fullName evidence="2">50S ribosomal protein L11</fullName>
    </alternativeName>
</protein>
<dbReference type="EMBL" id="CP001130">
    <property type="protein sequence ID" value="ACG56944.1"/>
    <property type="molecule type" value="Genomic_DNA"/>
</dbReference>
<dbReference type="RefSeq" id="WP_012513301.1">
    <property type="nucleotide sequence ID" value="NC_011126.1"/>
</dbReference>
<dbReference type="SMR" id="B4U733"/>
<dbReference type="STRING" id="380749.HY04AAS1_0254"/>
<dbReference type="KEGG" id="hya:HY04AAS1_0254"/>
<dbReference type="eggNOG" id="COG0080">
    <property type="taxonomic scope" value="Bacteria"/>
</dbReference>
<dbReference type="HOGENOM" id="CLU_074237_2_1_0"/>
<dbReference type="OrthoDB" id="9802408at2"/>
<dbReference type="GO" id="GO:0022625">
    <property type="term" value="C:cytosolic large ribosomal subunit"/>
    <property type="evidence" value="ECO:0007669"/>
    <property type="project" value="TreeGrafter"/>
</dbReference>
<dbReference type="GO" id="GO:0070180">
    <property type="term" value="F:large ribosomal subunit rRNA binding"/>
    <property type="evidence" value="ECO:0007669"/>
    <property type="project" value="UniProtKB-UniRule"/>
</dbReference>
<dbReference type="GO" id="GO:0003735">
    <property type="term" value="F:structural constituent of ribosome"/>
    <property type="evidence" value="ECO:0007669"/>
    <property type="project" value="InterPro"/>
</dbReference>
<dbReference type="GO" id="GO:0006412">
    <property type="term" value="P:translation"/>
    <property type="evidence" value="ECO:0007669"/>
    <property type="project" value="UniProtKB-UniRule"/>
</dbReference>
<dbReference type="CDD" id="cd00349">
    <property type="entry name" value="Ribosomal_L11"/>
    <property type="match status" value="1"/>
</dbReference>
<dbReference type="FunFam" id="1.10.10.250:FF:000001">
    <property type="entry name" value="50S ribosomal protein L11"/>
    <property type="match status" value="1"/>
</dbReference>
<dbReference type="FunFam" id="3.30.1550.10:FF:000005">
    <property type="entry name" value="50S ribosomal protein L11"/>
    <property type="match status" value="1"/>
</dbReference>
<dbReference type="Gene3D" id="1.10.10.250">
    <property type="entry name" value="Ribosomal protein L11, C-terminal domain"/>
    <property type="match status" value="1"/>
</dbReference>
<dbReference type="Gene3D" id="3.30.1550.10">
    <property type="entry name" value="Ribosomal protein L11/L12, N-terminal domain"/>
    <property type="match status" value="1"/>
</dbReference>
<dbReference type="HAMAP" id="MF_00736">
    <property type="entry name" value="Ribosomal_uL11"/>
    <property type="match status" value="1"/>
</dbReference>
<dbReference type="InterPro" id="IPR000911">
    <property type="entry name" value="Ribosomal_uL11"/>
</dbReference>
<dbReference type="InterPro" id="IPR006519">
    <property type="entry name" value="Ribosomal_uL11_bac-typ"/>
</dbReference>
<dbReference type="InterPro" id="IPR020783">
    <property type="entry name" value="Ribosomal_uL11_C"/>
</dbReference>
<dbReference type="InterPro" id="IPR036769">
    <property type="entry name" value="Ribosomal_uL11_C_sf"/>
</dbReference>
<dbReference type="InterPro" id="IPR020785">
    <property type="entry name" value="Ribosomal_uL11_CS"/>
</dbReference>
<dbReference type="InterPro" id="IPR020784">
    <property type="entry name" value="Ribosomal_uL11_N"/>
</dbReference>
<dbReference type="InterPro" id="IPR036796">
    <property type="entry name" value="Ribosomal_uL11_N_sf"/>
</dbReference>
<dbReference type="NCBIfam" id="TIGR01632">
    <property type="entry name" value="L11_bact"/>
    <property type="match status" value="1"/>
</dbReference>
<dbReference type="PANTHER" id="PTHR11661">
    <property type="entry name" value="60S RIBOSOMAL PROTEIN L12"/>
    <property type="match status" value="1"/>
</dbReference>
<dbReference type="PANTHER" id="PTHR11661:SF1">
    <property type="entry name" value="LARGE RIBOSOMAL SUBUNIT PROTEIN UL11M"/>
    <property type="match status" value="1"/>
</dbReference>
<dbReference type="Pfam" id="PF00298">
    <property type="entry name" value="Ribosomal_L11"/>
    <property type="match status" value="1"/>
</dbReference>
<dbReference type="Pfam" id="PF03946">
    <property type="entry name" value="Ribosomal_L11_N"/>
    <property type="match status" value="1"/>
</dbReference>
<dbReference type="SMART" id="SM00649">
    <property type="entry name" value="RL11"/>
    <property type="match status" value="1"/>
</dbReference>
<dbReference type="SUPFAM" id="SSF54747">
    <property type="entry name" value="Ribosomal L11/L12e N-terminal domain"/>
    <property type="match status" value="1"/>
</dbReference>
<dbReference type="SUPFAM" id="SSF46906">
    <property type="entry name" value="Ribosomal protein L11, C-terminal domain"/>
    <property type="match status" value="1"/>
</dbReference>
<dbReference type="PROSITE" id="PS00359">
    <property type="entry name" value="RIBOSOMAL_L11"/>
    <property type="match status" value="1"/>
</dbReference>
<comment type="function">
    <text evidence="1">Forms part of the ribosomal stalk which helps the ribosome interact with GTP-bound translation factors.</text>
</comment>
<comment type="subunit">
    <text evidence="1">Part of the ribosomal stalk of the 50S ribosomal subunit. Interacts with L10 and the large rRNA to form the base of the stalk. L10 forms an elongated spine to which L12 dimers bind in a sequential fashion forming a multimeric L10(L12)X complex.</text>
</comment>
<comment type="PTM">
    <text evidence="1">One or more lysine residues are methylated.</text>
</comment>
<comment type="similarity">
    <text evidence="1">Belongs to the universal ribosomal protein uL11 family.</text>
</comment>
<reference key="1">
    <citation type="journal article" date="2009" name="J. Bacteriol.">
        <title>Complete and draft genome sequences of six members of the Aquificales.</title>
        <authorList>
            <person name="Reysenbach A.-L."/>
            <person name="Hamamura N."/>
            <person name="Podar M."/>
            <person name="Griffiths E."/>
            <person name="Ferreira S."/>
            <person name="Hochstein R."/>
            <person name="Heidelberg J."/>
            <person name="Johnson J."/>
            <person name="Mead D."/>
            <person name="Pohorille A."/>
            <person name="Sarmiento M."/>
            <person name="Schweighofer K."/>
            <person name="Seshadri R."/>
            <person name="Voytek M.A."/>
        </authorList>
    </citation>
    <scope>NUCLEOTIDE SEQUENCE [LARGE SCALE GENOMIC DNA]</scope>
    <source>
        <strain>Y04AAS1</strain>
    </source>
</reference>
<organism>
    <name type="scientific">Hydrogenobaculum sp. (strain Y04AAS1)</name>
    <dbReference type="NCBI Taxonomy" id="380749"/>
    <lineage>
        <taxon>Bacteria</taxon>
        <taxon>Pseudomonadati</taxon>
        <taxon>Aquificota</taxon>
        <taxon>Aquificia</taxon>
        <taxon>Aquificales</taxon>
        <taxon>Aquificaceae</taxon>
        <taxon>Hydrogenobaculum</taxon>
    </lineage>
</organism>
<gene>
    <name evidence="1" type="primary">rplK</name>
    <name type="ordered locus">HY04AAS1_0254</name>
</gene>
<keyword id="KW-0488">Methylation</keyword>
<keyword id="KW-0687">Ribonucleoprotein</keyword>
<keyword id="KW-0689">Ribosomal protein</keyword>
<keyword id="KW-0694">RNA-binding</keyword>
<keyword id="KW-0699">rRNA-binding</keyword>